<dbReference type="EMBL" id="AM884176">
    <property type="protein sequence ID" value="CAP04037.1"/>
    <property type="molecule type" value="Genomic_DNA"/>
</dbReference>
<dbReference type="RefSeq" id="WP_009871693.1">
    <property type="nucleotide sequence ID" value="NC_010287.1"/>
</dbReference>
<dbReference type="RefSeq" id="YP_001654672.1">
    <property type="nucleotide sequence ID" value="NC_010287.1"/>
</dbReference>
<dbReference type="SMR" id="B0B7R1"/>
<dbReference type="GeneID" id="1245980"/>
<dbReference type="KEGG" id="ctb:CTL0596"/>
<dbReference type="PATRIC" id="fig|471472.4.peg.642"/>
<dbReference type="HOGENOM" id="CLU_159258_2_3_0"/>
<dbReference type="PRO" id="PR:B0B7R1"/>
<dbReference type="Proteomes" id="UP001154402">
    <property type="component" value="Chromosome"/>
</dbReference>
<dbReference type="GO" id="GO:1990904">
    <property type="term" value="C:ribonucleoprotein complex"/>
    <property type="evidence" value="ECO:0007669"/>
    <property type="project" value="UniProtKB-KW"/>
</dbReference>
<dbReference type="GO" id="GO:0005840">
    <property type="term" value="C:ribosome"/>
    <property type="evidence" value="ECO:0007669"/>
    <property type="project" value="UniProtKB-KW"/>
</dbReference>
<dbReference type="GO" id="GO:0003735">
    <property type="term" value="F:structural constituent of ribosome"/>
    <property type="evidence" value="ECO:0007669"/>
    <property type="project" value="InterPro"/>
</dbReference>
<dbReference type="GO" id="GO:0006412">
    <property type="term" value="P:translation"/>
    <property type="evidence" value="ECO:0007669"/>
    <property type="project" value="UniProtKB-UniRule"/>
</dbReference>
<dbReference type="Gene3D" id="1.20.5.1150">
    <property type="entry name" value="Ribosomal protein S8"/>
    <property type="match status" value="1"/>
</dbReference>
<dbReference type="HAMAP" id="MF_00358">
    <property type="entry name" value="Ribosomal_bS21"/>
    <property type="match status" value="1"/>
</dbReference>
<dbReference type="InterPro" id="IPR001911">
    <property type="entry name" value="Ribosomal_bS21"/>
</dbReference>
<dbReference type="InterPro" id="IPR038380">
    <property type="entry name" value="Ribosomal_bS21_sf"/>
</dbReference>
<dbReference type="NCBIfam" id="TIGR00030">
    <property type="entry name" value="S21p"/>
    <property type="match status" value="1"/>
</dbReference>
<dbReference type="Pfam" id="PF01165">
    <property type="entry name" value="Ribosomal_S21"/>
    <property type="match status" value="1"/>
</dbReference>
<dbReference type="PRINTS" id="PR00976">
    <property type="entry name" value="RIBOSOMALS21"/>
</dbReference>
<keyword id="KW-0687">Ribonucleoprotein</keyword>
<keyword id="KW-0689">Ribosomal protein</keyword>
<evidence type="ECO:0000255" key="1">
    <source>
        <dbReference type="HAMAP-Rule" id="MF_00358"/>
    </source>
</evidence>
<evidence type="ECO:0000256" key="2">
    <source>
        <dbReference type="SAM" id="MobiDB-lite"/>
    </source>
</evidence>
<evidence type="ECO:0000305" key="3"/>
<reference key="1">
    <citation type="journal article" date="2008" name="Genome Res.">
        <title>Chlamydia trachomatis: genome sequence analysis of lymphogranuloma venereum isolates.</title>
        <authorList>
            <person name="Thomson N.R."/>
            <person name="Holden M.T.G."/>
            <person name="Carder C."/>
            <person name="Lennard N."/>
            <person name="Lockey S.J."/>
            <person name="Marsh P."/>
            <person name="Skipp P."/>
            <person name="O'Connor C.D."/>
            <person name="Goodhead I."/>
            <person name="Norbertzcak H."/>
            <person name="Harris B."/>
            <person name="Ormond D."/>
            <person name="Rance R."/>
            <person name="Quail M.A."/>
            <person name="Parkhill J."/>
            <person name="Stephens R.S."/>
            <person name="Clarke I.N."/>
        </authorList>
    </citation>
    <scope>NUCLEOTIDE SEQUENCE [LARGE SCALE GENOMIC DNA]</scope>
    <source>
        <strain>ATCC VR-902B / DSM 19102 / 434/Bu</strain>
    </source>
</reference>
<name>RS21_CHLT2</name>
<proteinExistence type="inferred from homology"/>
<comment type="similarity">
    <text evidence="1">Belongs to the bacterial ribosomal protein bS21 family.</text>
</comment>
<protein>
    <recommendedName>
        <fullName evidence="1">Small ribosomal subunit protein bS21</fullName>
    </recommendedName>
    <alternativeName>
        <fullName evidence="3">30S ribosomal protein S21</fullName>
    </alternativeName>
</protein>
<feature type="chain" id="PRO_1000120599" description="Small ribosomal subunit protein bS21">
    <location>
        <begin position="1"/>
        <end position="58"/>
    </location>
</feature>
<feature type="region of interest" description="Disordered" evidence="2">
    <location>
        <begin position="37"/>
        <end position="58"/>
    </location>
</feature>
<feature type="compositionally biased region" description="Basic residues" evidence="2">
    <location>
        <begin position="43"/>
        <end position="58"/>
    </location>
</feature>
<gene>
    <name evidence="1" type="primary">rpsU</name>
    <name type="ordered locus">CTL0596</name>
</gene>
<organism>
    <name type="scientific">Chlamydia trachomatis serovar L2 (strain ATCC VR-902B / DSM 19102 / 434/Bu)</name>
    <dbReference type="NCBI Taxonomy" id="471472"/>
    <lineage>
        <taxon>Bacteria</taxon>
        <taxon>Pseudomonadati</taxon>
        <taxon>Chlamydiota</taxon>
        <taxon>Chlamydiia</taxon>
        <taxon>Chlamydiales</taxon>
        <taxon>Chlamydiaceae</taxon>
        <taxon>Chlamydia/Chlamydophila group</taxon>
        <taxon>Chlamydia</taxon>
    </lineage>
</organism>
<sequence length="58" mass="6666">MPSVKVRVGEPIDRALRILKKKIDKEGILKTSKSHRFYDKPSVKKRAKSKAAAKYRGR</sequence>
<accession>B0B7R1</accession>